<proteinExistence type="evidence at transcript level"/>
<evidence type="ECO:0000255" key="1"/>
<evidence type="ECO:0000255" key="2">
    <source>
        <dbReference type="PROSITE-ProRule" id="PRU01103"/>
    </source>
</evidence>
<evidence type="ECO:0000255" key="3">
    <source>
        <dbReference type="PROSITE-ProRule" id="PRU10094"/>
    </source>
</evidence>
<evidence type="ECO:0000256" key="4">
    <source>
        <dbReference type="SAM" id="MobiDB-lite"/>
    </source>
</evidence>
<evidence type="ECO:0000305" key="5"/>
<keyword id="KW-0064">Aspartyl protease</keyword>
<keyword id="KW-1003">Cell membrane</keyword>
<keyword id="KW-0325">Glycoprotein</keyword>
<keyword id="KW-0336">GPI-anchor</keyword>
<keyword id="KW-0378">Hydrolase</keyword>
<keyword id="KW-0449">Lipoprotein</keyword>
<keyword id="KW-0472">Membrane</keyword>
<keyword id="KW-0645">Protease</keyword>
<keyword id="KW-1185">Reference proteome</keyword>
<keyword id="KW-0732">Signal</keyword>
<reference key="1">
    <citation type="journal article" date="2000" name="Nature">
        <title>Sequence and analysis of chromosome 5 of the plant Arabidopsis thaliana.</title>
        <authorList>
            <person name="Tabata S."/>
            <person name="Kaneko T."/>
            <person name="Nakamura Y."/>
            <person name="Kotani H."/>
            <person name="Kato T."/>
            <person name="Asamizu E."/>
            <person name="Miyajima N."/>
            <person name="Sasamoto S."/>
            <person name="Kimura T."/>
            <person name="Hosouchi T."/>
            <person name="Kawashima K."/>
            <person name="Kohara M."/>
            <person name="Matsumoto M."/>
            <person name="Matsuno A."/>
            <person name="Muraki A."/>
            <person name="Nakayama S."/>
            <person name="Nakazaki N."/>
            <person name="Naruo K."/>
            <person name="Okumura S."/>
            <person name="Shinpo S."/>
            <person name="Takeuchi C."/>
            <person name="Wada T."/>
            <person name="Watanabe A."/>
            <person name="Yamada M."/>
            <person name="Yasuda M."/>
            <person name="Sato S."/>
            <person name="de la Bastide M."/>
            <person name="Huang E."/>
            <person name="Spiegel L."/>
            <person name="Gnoj L."/>
            <person name="O'Shaughnessy A."/>
            <person name="Preston R."/>
            <person name="Habermann K."/>
            <person name="Murray J."/>
            <person name="Johnson D."/>
            <person name="Rohlfing T."/>
            <person name="Nelson J."/>
            <person name="Stoneking T."/>
            <person name="Pepin K."/>
            <person name="Spieth J."/>
            <person name="Sekhon M."/>
            <person name="Armstrong J."/>
            <person name="Becker M."/>
            <person name="Belter E."/>
            <person name="Cordum H."/>
            <person name="Cordes M."/>
            <person name="Courtney L."/>
            <person name="Courtney W."/>
            <person name="Dante M."/>
            <person name="Du H."/>
            <person name="Edwards J."/>
            <person name="Fryman J."/>
            <person name="Haakensen B."/>
            <person name="Lamar E."/>
            <person name="Latreille P."/>
            <person name="Leonard S."/>
            <person name="Meyer R."/>
            <person name="Mulvaney E."/>
            <person name="Ozersky P."/>
            <person name="Riley A."/>
            <person name="Strowmatt C."/>
            <person name="Wagner-McPherson C."/>
            <person name="Wollam A."/>
            <person name="Yoakum M."/>
            <person name="Bell M."/>
            <person name="Dedhia N."/>
            <person name="Parnell L."/>
            <person name="Shah R."/>
            <person name="Rodriguez M."/>
            <person name="Hoon See L."/>
            <person name="Vil D."/>
            <person name="Baker J."/>
            <person name="Kirchoff K."/>
            <person name="Toth K."/>
            <person name="King L."/>
            <person name="Bahret A."/>
            <person name="Miller B."/>
            <person name="Marra M.A."/>
            <person name="Martienssen R."/>
            <person name="McCombie W.R."/>
            <person name="Wilson R.K."/>
            <person name="Murphy G."/>
            <person name="Bancroft I."/>
            <person name="Volckaert G."/>
            <person name="Wambutt R."/>
            <person name="Duesterhoeft A."/>
            <person name="Stiekema W."/>
            <person name="Pohl T."/>
            <person name="Entian K.-D."/>
            <person name="Terryn N."/>
            <person name="Hartley N."/>
            <person name="Bent E."/>
            <person name="Johnson S."/>
            <person name="Langham S.-A."/>
            <person name="McCullagh B."/>
            <person name="Robben J."/>
            <person name="Grymonprez B."/>
            <person name="Zimmermann W."/>
            <person name="Ramsperger U."/>
            <person name="Wedler H."/>
            <person name="Balke K."/>
            <person name="Wedler E."/>
            <person name="Peters S."/>
            <person name="van Staveren M."/>
            <person name="Dirkse W."/>
            <person name="Mooijman P."/>
            <person name="Klein Lankhorst R."/>
            <person name="Weitzenegger T."/>
            <person name="Bothe G."/>
            <person name="Rose M."/>
            <person name="Hauf J."/>
            <person name="Berneiser S."/>
            <person name="Hempel S."/>
            <person name="Feldpausch M."/>
            <person name="Lamberth S."/>
            <person name="Villarroel R."/>
            <person name="Gielen J."/>
            <person name="Ardiles W."/>
            <person name="Bents O."/>
            <person name="Lemcke K."/>
            <person name="Kolesov G."/>
            <person name="Mayer K.F.X."/>
            <person name="Rudd S."/>
            <person name="Schoof H."/>
            <person name="Schueller C."/>
            <person name="Zaccaria P."/>
            <person name="Mewes H.-W."/>
            <person name="Bevan M."/>
            <person name="Fransz P.F."/>
        </authorList>
    </citation>
    <scope>NUCLEOTIDE SEQUENCE [LARGE SCALE GENOMIC DNA]</scope>
    <source>
        <strain>cv. Columbia</strain>
    </source>
</reference>
<reference key="2">
    <citation type="journal article" date="2017" name="Plant J.">
        <title>Araport11: a complete reannotation of the Arabidopsis thaliana reference genome.</title>
        <authorList>
            <person name="Cheng C.Y."/>
            <person name="Krishnakumar V."/>
            <person name="Chan A.P."/>
            <person name="Thibaud-Nissen F."/>
            <person name="Schobel S."/>
            <person name="Town C.D."/>
        </authorList>
    </citation>
    <scope>GENOME REANNOTATION</scope>
    <source>
        <strain>cv. Columbia</strain>
    </source>
</reference>
<reference key="3">
    <citation type="submission" date="2006-07" db="EMBL/GenBank/DDBJ databases">
        <title>Large-scale analysis of RIKEN Arabidopsis full-length (RAFL) cDNAs.</title>
        <authorList>
            <person name="Totoki Y."/>
            <person name="Seki M."/>
            <person name="Ishida J."/>
            <person name="Nakajima M."/>
            <person name="Enju A."/>
            <person name="Kamiya A."/>
            <person name="Narusaka M."/>
            <person name="Shin-i T."/>
            <person name="Nakagawa M."/>
            <person name="Sakamoto N."/>
            <person name="Oishi K."/>
            <person name="Kohara Y."/>
            <person name="Kobayashi M."/>
            <person name="Toyoda A."/>
            <person name="Sakaki Y."/>
            <person name="Sakurai T."/>
            <person name="Iida K."/>
            <person name="Akiyama K."/>
            <person name="Satou M."/>
            <person name="Toyoda T."/>
            <person name="Konagaya A."/>
            <person name="Carninci P."/>
            <person name="Kawai J."/>
            <person name="Hayashizaki Y."/>
            <person name="Shinozaki K."/>
        </authorList>
    </citation>
    <scope>NUCLEOTIDE SEQUENCE [LARGE SCALE MRNA]</scope>
    <source>
        <strain>cv. Columbia</strain>
    </source>
</reference>
<comment type="subcellular location">
    <subcellularLocation>
        <location>Cell membrane</location>
        <topology>Lipid-anchor</topology>
        <topology>GPI-anchor</topology>
    </subcellularLocation>
</comment>
<comment type="similarity">
    <text evidence="5">Belongs to the peptidase A1 family.</text>
</comment>
<comment type="sequence caution" evidence="5">
    <conflict type="frameshift">
        <sequence resource="EMBL-CDS" id="BAE98882"/>
    </conflict>
</comment>
<organism>
    <name type="scientific">Arabidopsis thaliana</name>
    <name type="common">Mouse-ear cress</name>
    <dbReference type="NCBI Taxonomy" id="3702"/>
    <lineage>
        <taxon>Eukaryota</taxon>
        <taxon>Viridiplantae</taxon>
        <taxon>Streptophyta</taxon>
        <taxon>Embryophyta</taxon>
        <taxon>Tracheophyta</taxon>
        <taxon>Spermatophyta</taxon>
        <taxon>Magnoliopsida</taxon>
        <taxon>eudicotyledons</taxon>
        <taxon>Gunneridae</taxon>
        <taxon>Pentapetalae</taxon>
        <taxon>rosids</taxon>
        <taxon>malvids</taxon>
        <taxon>Brassicales</taxon>
        <taxon>Brassicaceae</taxon>
        <taxon>Camelineae</taxon>
        <taxon>Arabidopsis</taxon>
    </lineage>
</organism>
<protein>
    <recommendedName>
        <fullName>Aspartic proteinase-like protein 1</fullName>
        <ecNumber>3.4.23.-</ecNumber>
    </recommendedName>
</protein>
<sequence length="528" mass="57961">MVSRSAFLLFCVLFLATEETLASLFSSRLIHRFSDEGRASIKTPSSSDSLPNKQSLEYYRLLAESDFRRQRMNLGAKVQSLVPSEGSKTISSGNDFGWLHYTWIDIGTPSVSFLVALDTGSNLLWIPCNCVQCAPLTSTYYSSLATKDLNEYNPSSSSTSKVFLCSHKLCDSASDCESPKEQCPYTVNYLSGNTSSSGLLVEDILHLTYNTNNRLMNGSSSVKARVVIGCGKKQSGDYLDGVAPDGLMGLGPAEISVPSFLSKAGLMRNSFSLCFDEEDSGRIYFGDMGPSIQQSTPFLQLDNNKYSGYIVGVEACCIGNSCLKQTSFTTFIDSGQSFTYLPEEIYRKVALEIDRHINATSKNFEGVSWEYCYESSAEPKVPAIKLKFSHNNTFVIHKPLFVFQQSQGLVQFCLPISPSGQEGIGSIGQNYMRGYRMVFDRENMKLGWSPSKCQEDKIEPPQASPGSTSSPNPLPTDEQQSRGGHAVSPAIAGKTPSKTPSSSSSYSFSSIMRLFNSLLLLHWLASLM</sequence>
<feature type="signal peptide" evidence="1">
    <location>
        <begin position="1"/>
        <end position="22"/>
    </location>
</feature>
<feature type="chain" id="PRO_0000259442" description="Aspartic proteinase-like protein 1">
    <location>
        <begin position="23"/>
        <end position="503"/>
    </location>
</feature>
<feature type="propeptide" id="PRO_0000259443" description="Removed in mature form" evidence="1">
    <location>
        <begin position="504"/>
        <end position="528"/>
    </location>
</feature>
<feature type="domain" description="Peptidase A1" evidence="2">
    <location>
        <begin position="100"/>
        <end position="449"/>
    </location>
</feature>
<feature type="region of interest" description="Disordered" evidence="4">
    <location>
        <begin position="451"/>
        <end position="503"/>
    </location>
</feature>
<feature type="compositionally biased region" description="Polar residues" evidence="4">
    <location>
        <begin position="464"/>
        <end position="482"/>
    </location>
</feature>
<feature type="compositionally biased region" description="Low complexity" evidence="4">
    <location>
        <begin position="494"/>
        <end position="503"/>
    </location>
</feature>
<feature type="active site" evidence="3">
    <location>
        <position position="118"/>
    </location>
</feature>
<feature type="active site" evidence="3">
    <location>
        <position position="333"/>
    </location>
</feature>
<feature type="lipid moiety-binding region" description="GPI-anchor amidated serine" evidence="1">
    <location>
        <position position="503"/>
    </location>
</feature>
<feature type="glycosylation site" description="N-linked (GlcNAc...) asparagine" evidence="1">
    <location>
        <position position="193"/>
    </location>
</feature>
<feature type="glycosylation site" description="N-linked (GlcNAc...) asparagine" evidence="1">
    <location>
        <position position="217"/>
    </location>
</feature>
<feature type="glycosylation site" description="N-linked (GlcNAc...) asparagine" evidence="1">
    <location>
        <position position="358"/>
    </location>
</feature>
<feature type="glycosylation site" description="N-linked (GlcNAc...) asparagine" evidence="1">
    <location>
        <position position="391"/>
    </location>
</feature>
<accession>Q9LX20</accession>
<accession>Q0WVG6</accession>
<name>ASPL1_ARATH</name>
<dbReference type="EC" id="3.4.23.-"/>
<dbReference type="EMBL" id="AL356332">
    <property type="protein sequence ID" value="CAB92049.1"/>
    <property type="molecule type" value="Genomic_DNA"/>
</dbReference>
<dbReference type="EMBL" id="CP002688">
    <property type="protein sequence ID" value="AED91491.1"/>
    <property type="molecule type" value="Genomic_DNA"/>
</dbReference>
<dbReference type="EMBL" id="AK226784">
    <property type="protein sequence ID" value="BAE98882.1"/>
    <property type="status" value="ALT_FRAME"/>
    <property type="molecule type" value="mRNA"/>
</dbReference>
<dbReference type="PIR" id="T50012">
    <property type="entry name" value="T50012"/>
</dbReference>
<dbReference type="RefSeq" id="NP_196570.1">
    <property type="nucleotide sequence ID" value="NM_121046.2"/>
</dbReference>
<dbReference type="SMR" id="Q9LX20"/>
<dbReference type="FunCoup" id="Q9LX20">
    <property type="interactions" value="221"/>
</dbReference>
<dbReference type="STRING" id="3702.Q9LX20"/>
<dbReference type="MEROPS" id="A01.A55"/>
<dbReference type="GlyGen" id="Q9LX20">
    <property type="glycosylation" value="4 sites"/>
</dbReference>
<dbReference type="PaxDb" id="3702-AT5G10080.1"/>
<dbReference type="ProteomicsDB" id="246698"/>
<dbReference type="EnsemblPlants" id="AT5G10080.1">
    <property type="protein sequence ID" value="AT5G10080.1"/>
    <property type="gene ID" value="AT5G10080"/>
</dbReference>
<dbReference type="GeneID" id="830872"/>
<dbReference type="Gramene" id="AT5G10080.1">
    <property type="protein sequence ID" value="AT5G10080.1"/>
    <property type="gene ID" value="AT5G10080"/>
</dbReference>
<dbReference type="KEGG" id="ath:AT5G10080"/>
<dbReference type="Araport" id="AT5G10080"/>
<dbReference type="TAIR" id="AT5G10080"/>
<dbReference type="eggNOG" id="KOG1339">
    <property type="taxonomic scope" value="Eukaryota"/>
</dbReference>
<dbReference type="HOGENOM" id="CLU_029667_2_0_1"/>
<dbReference type="InParanoid" id="Q9LX20"/>
<dbReference type="OMA" id="GEFAVFC"/>
<dbReference type="PhylomeDB" id="Q9LX20"/>
<dbReference type="PRO" id="PR:Q9LX20"/>
<dbReference type="Proteomes" id="UP000006548">
    <property type="component" value="Chromosome 5"/>
</dbReference>
<dbReference type="ExpressionAtlas" id="Q9LX20">
    <property type="expression patterns" value="baseline and differential"/>
</dbReference>
<dbReference type="GO" id="GO:0005886">
    <property type="term" value="C:plasma membrane"/>
    <property type="evidence" value="ECO:0007669"/>
    <property type="project" value="UniProtKB-SubCell"/>
</dbReference>
<dbReference type="GO" id="GO:0098552">
    <property type="term" value="C:side of membrane"/>
    <property type="evidence" value="ECO:0007669"/>
    <property type="project" value="UniProtKB-KW"/>
</dbReference>
<dbReference type="GO" id="GO:0004190">
    <property type="term" value="F:aspartic-type endopeptidase activity"/>
    <property type="evidence" value="ECO:0007669"/>
    <property type="project" value="UniProtKB-KW"/>
</dbReference>
<dbReference type="GO" id="GO:0006508">
    <property type="term" value="P:proteolysis"/>
    <property type="evidence" value="ECO:0007669"/>
    <property type="project" value="UniProtKB-KW"/>
</dbReference>
<dbReference type="FunFam" id="2.40.70.10:FF:000012">
    <property type="entry name" value="Aspartyl protease family protein 1"/>
    <property type="match status" value="1"/>
</dbReference>
<dbReference type="FunFam" id="2.40.70.10:FF:000014">
    <property type="entry name" value="Aspartyl protease family protein 1"/>
    <property type="match status" value="1"/>
</dbReference>
<dbReference type="Gene3D" id="2.40.70.10">
    <property type="entry name" value="Acid Proteases"/>
    <property type="match status" value="2"/>
</dbReference>
<dbReference type="InterPro" id="IPR001461">
    <property type="entry name" value="Aspartic_peptidase_A1"/>
</dbReference>
<dbReference type="InterPro" id="IPR001969">
    <property type="entry name" value="Aspartic_peptidase_AS"/>
</dbReference>
<dbReference type="InterPro" id="IPR033121">
    <property type="entry name" value="PEPTIDASE_A1"/>
</dbReference>
<dbReference type="InterPro" id="IPR021109">
    <property type="entry name" value="Peptidase_aspartic_dom_sf"/>
</dbReference>
<dbReference type="InterPro" id="IPR032799">
    <property type="entry name" value="TAXi_C"/>
</dbReference>
<dbReference type="InterPro" id="IPR032861">
    <property type="entry name" value="TAXi_N"/>
</dbReference>
<dbReference type="PANTHER" id="PTHR13683:SF743">
    <property type="entry name" value="ASPARTIC PROTEINASE-LIKE PROTEIN 1"/>
    <property type="match status" value="1"/>
</dbReference>
<dbReference type="PANTHER" id="PTHR13683">
    <property type="entry name" value="ASPARTYL PROTEASES"/>
    <property type="match status" value="1"/>
</dbReference>
<dbReference type="Pfam" id="PF14541">
    <property type="entry name" value="TAXi_C"/>
    <property type="match status" value="1"/>
</dbReference>
<dbReference type="Pfam" id="PF14543">
    <property type="entry name" value="TAXi_N"/>
    <property type="match status" value="1"/>
</dbReference>
<dbReference type="PRINTS" id="PR00792">
    <property type="entry name" value="PEPSIN"/>
</dbReference>
<dbReference type="SUPFAM" id="SSF50630">
    <property type="entry name" value="Acid proteases"/>
    <property type="match status" value="1"/>
</dbReference>
<dbReference type="PROSITE" id="PS00141">
    <property type="entry name" value="ASP_PROTEASE"/>
    <property type="match status" value="1"/>
</dbReference>
<dbReference type="PROSITE" id="PS51767">
    <property type="entry name" value="PEPTIDASE_A1"/>
    <property type="match status" value="1"/>
</dbReference>
<gene>
    <name type="ordered locus">At5g10080</name>
    <name type="ORF">T31P16.70</name>
</gene>